<evidence type="ECO:0000255" key="1">
    <source>
        <dbReference type="HAMAP-Rule" id="MF_00394"/>
    </source>
</evidence>
<protein>
    <recommendedName>
        <fullName evidence="1">Glycerol-3-phosphate dehydrogenase [NAD(P)+]</fullName>
        <ecNumber evidence="1">1.1.1.94</ecNumber>
    </recommendedName>
    <alternativeName>
        <fullName evidence="1">NAD(P)(+)-dependent glycerol-3-phosphate dehydrogenase</fullName>
    </alternativeName>
    <alternativeName>
        <fullName evidence="1">NAD(P)H-dependent dihydroxyacetone-phosphate reductase</fullName>
    </alternativeName>
</protein>
<gene>
    <name evidence="1" type="primary">gpsA</name>
    <name type="ordered locus">HPAG1_0945</name>
</gene>
<name>GPDA_HELPH</name>
<reference key="1">
    <citation type="journal article" date="2006" name="Proc. Natl. Acad. Sci. U.S.A.">
        <title>The complete genome sequence of a chronic atrophic gastritis Helicobacter pylori strain: evolution during disease progression.</title>
        <authorList>
            <person name="Oh J.D."/>
            <person name="Kling-Baeckhed H."/>
            <person name="Giannakis M."/>
            <person name="Xu J."/>
            <person name="Fulton R.S."/>
            <person name="Fulton L.A."/>
            <person name="Cordum H.S."/>
            <person name="Wang C."/>
            <person name="Elliott G."/>
            <person name="Edwards J."/>
            <person name="Mardis E.R."/>
            <person name="Engstrand L.G."/>
            <person name="Gordon J.I."/>
        </authorList>
    </citation>
    <scope>NUCLEOTIDE SEQUENCE [LARGE SCALE GENOMIC DNA]</scope>
    <source>
        <strain>HPAG1</strain>
    </source>
</reference>
<sequence length="312" mass="33332">MEIAVFGGGAWGRALAFAFGEKNEVKIISRRDLNEPLKKLNGALISKGSAPIEQVDLQRGLKAALYVIAISVQHLREWFQNASLPKNAKVLIASKGIEVLNRAFVSEIAKDFIDPNSLCFLAGPSFAAEIIQGLPCALVIHSNNQALALEFANKTPSFIRAYAQQDIIGGEIAGAYKNVIAIAGGVCDGLKLGNSAKASLLSRGLVEMQRFGAFFGGKTETFLGLSGAGDLFLTANSILSRNYRVGLGLAQNKPLEVVLEELGEVAEGVKTTNAIVEIARKYGIYTPIASELALLLKGKSVLESMNDLIRRA</sequence>
<feature type="chain" id="PRO_0000255320" description="Glycerol-3-phosphate dehydrogenase [NAD(P)+]">
    <location>
        <begin position="1"/>
        <end position="312"/>
    </location>
</feature>
<feature type="active site" description="Proton acceptor" evidence="1">
    <location>
        <position position="177"/>
    </location>
</feature>
<feature type="binding site" evidence="1">
    <location>
        <position position="11"/>
    </location>
    <ligand>
        <name>NADPH</name>
        <dbReference type="ChEBI" id="CHEBI:57783"/>
    </ligand>
</feature>
<feature type="binding site" evidence="1">
    <location>
        <position position="30"/>
    </location>
    <ligand>
        <name>NADPH</name>
        <dbReference type="ChEBI" id="CHEBI:57783"/>
    </ligand>
</feature>
<feature type="binding site" evidence="1">
    <location>
        <position position="31"/>
    </location>
    <ligand>
        <name>NADPH</name>
        <dbReference type="ChEBI" id="CHEBI:57783"/>
    </ligand>
</feature>
<feature type="binding site" evidence="1">
    <location>
        <position position="95"/>
    </location>
    <ligand>
        <name>NADPH</name>
        <dbReference type="ChEBI" id="CHEBI:57783"/>
    </ligand>
</feature>
<feature type="binding site" evidence="1">
    <location>
        <position position="95"/>
    </location>
    <ligand>
        <name>sn-glycerol 3-phosphate</name>
        <dbReference type="ChEBI" id="CHEBI:57597"/>
    </ligand>
</feature>
<feature type="binding site" evidence="1">
    <location>
        <position position="123"/>
    </location>
    <ligand>
        <name>sn-glycerol 3-phosphate</name>
        <dbReference type="ChEBI" id="CHEBI:57597"/>
    </ligand>
</feature>
<feature type="binding site" evidence="1">
    <location>
        <position position="125"/>
    </location>
    <ligand>
        <name>sn-glycerol 3-phosphate</name>
        <dbReference type="ChEBI" id="CHEBI:57597"/>
    </ligand>
</feature>
<feature type="binding site" evidence="1">
    <location>
        <position position="127"/>
    </location>
    <ligand>
        <name>NADPH</name>
        <dbReference type="ChEBI" id="CHEBI:57783"/>
    </ligand>
</feature>
<feature type="binding site" evidence="1">
    <location>
        <position position="177"/>
    </location>
    <ligand>
        <name>sn-glycerol 3-phosphate</name>
        <dbReference type="ChEBI" id="CHEBI:57597"/>
    </ligand>
</feature>
<feature type="binding site" evidence="1">
    <location>
        <position position="230"/>
    </location>
    <ligand>
        <name>sn-glycerol 3-phosphate</name>
        <dbReference type="ChEBI" id="CHEBI:57597"/>
    </ligand>
</feature>
<feature type="binding site" evidence="1">
    <location>
        <position position="240"/>
    </location>
    <ligand>
        <name>sn-glycerol 3-phosphate</name>
        <dbReference type="ChEBI" id="CHEBI:57597"/>
    </ligand>
</feature>
<feature type="binding site" evidence="1">
    <location>
        <position position="241"/>
    </location>
    <ligand>
        <name>NADPH</name>
        <dbReference type="ChEBI" id="CHEBI:57783"/>
    </ligand>
</feature>
<feature type="binding site" evidence="1">
    <location>
        <position position="241"/>
    </location>
    <ligand>
        <name>sn-glycerol 3-phosphate</name>
        <dbReference type="ChEBI" id="CHEBI:57597"/>
    </ligand>
</feature>
<feature type="binding site" evidence="1">
    <location>
        <position position="242"/>
    </location>
    <ligand>
        <name>sn-glycerol 3-phosphate</name>
        <dbReference type="ChEBI" id="CHEBI:57597"/>
    </ligand>
</feature>
<feature type="binding site" evidence="1">
    <location>
        <position position="265"/>
    </location>
    <ligand>
        <name>NADPH</name>
        <dbReference type="ChEBI" id="CHEBI:57783"/>
    </ligand>
</feature>
<feature type="binding site" evidence="1">
    <location>
        <position position="267"/>
    </location>
    <ligand>
        <name>NADPH</name>
        <dbReference type="ChEBI" id="CHEBI:57783"/>
    </ligand>
</feature>
<accession>Q1CSR0</accession>
<comment type="function">
    <text evidence="1">Catalyzes the reduction of the glycolytic intermediate dihydroxyacetone phosphate (DHAP) to sn-glycerol 3-phosphate (G3P), the key precursor for phospholipid synthesis.</text>
</comment>
<comment type="catalytic activity">
    <reaction evidence="1">
        <text>sn-glycerol 3-phosphate + NAD(+) = dihydroxyacetone phosphate + NADH + H(+)</text>
        <dbReference type="Rhea" id="RHEA:11092"/>
        <dbReference type="ChEBI" id="CHEBI:15378"/>
        <dbReference type="ChEBI" id="CHEBI:57540"/>
        <dbReference type="ChEBI" id="CHEBI:57597"/>
        <dbReference type="ChEBI" id="CHEBI:57642"/>
        <dbReference type="ChEBI" id="CHEBI:57945"/>
        <dbReference type="EC" id="1.1.1.94"/>
    </reaction>
    <physiologicalReaction direction="right-to-left" evidence="1">
        <dbReference type="Rhea" id="RHEA:11094"/>
    </physiologicalReaction>
</comment>
<comment type="catalytic activity">
    <reaction evidence="1">
        <text>sn-glycerol 3-phosphate + NADP(+) = dihydroxyacetone phosphate + NADPH + H(+)</text>
        <dbReference type="Rhea" id="RHEA:11096"/>
        <dbReference type="ChEBI" id="CHEBI:15378"/>
        <dbReference type="ChEBI" id="CHEBI:57597"/>
        <dbReference type="ChEBI" id="CHEBI:57642"/>
        <dbReference type="ChEBI" id="CHEBI:57783"/>
        <dbReference type="ChEBI" id="CHEBI:58349"/>
        <dbReference type="EC" id="1.1.1.94"/>
    </reaction>
    <physiologicalReaction direction="right-to-left" evidence="1">
        <dbReference type="Rhea" id="RHEA:11098"/>
    </physiologicalReaction>
</comment>
<comment type="pathway">
    <text evidence="1">Membrane lipid metabolism; glycerophospholipid metabolism.</text>
</comment>
<comment type="subcellular location">
    <subcellularLocation>
        <location evidence="1">Cytoplasm</location>
    </subcellularLocation>
</comment>
<comment type="similarity">
    <text evidence="1">Belongs to the NAD-dependent glycerol-3-phosphate dehydrogenase family.</text>
</comment>
<proteinExistence type="inferred from homology"/>
<organism>
    <name type="scientific">Helicobacter pylori (strain HPAG1)</name>
    <dbReference type="NCBI Taxonomy" id="357544"/>
    <lineage>
        <taxon>Bacteria</taxon>
        <taxon>Pseudomonadati</taxon>
        <taxon>Campylobacterota</taxon>
        <taxon>Epsilonproteobacteria</taxon>
        <taxon>Campylobacterales</taxon>
        <taxon>Helicobacteraceae</taxon>
        <taxon>Helicobacter</taxon>
    </lineage>
</organism>
<keyword id="KW-0963">Cytoplasm</keyword>
<keyword id="KW-0444">Lipid biosynthesis</keyword>
<keyword id="KW-0443">Lipid metabolism</keyword>
<keyword id="KW-0520">NAD</keyword>
<keyword id="KW-0521">NADP</keyword>
<keyword id="KW-0547">Nucleotide-binding</keyword>
<keyword id="KW-0560">Oxidoreductase</keyword>
<keyword id="KW-0594">Phospholipid biosynthesis</keyword>
<keyword id="KW-1208">Phospholipid metabolism</keyword>
<dbReference type="EC" id="1.1.1.94" evidence="1"/>
<dbReference type="EMBL" id="CP000241">
    <property type="protein sequence ID" value="ABF85012.1"/>
    <property type="molecule type" value="Genomic_DNA"/>
</dbReference>
<dbReference type="RefSeq" id="WP_000401722.1">
    <property type="nucleotide sequence ID" value="NC_008086.1"/>
</dbReference>
<dbReference type="SMR" id="Q1CSR0"/>
<dbReference type="KEGG" id="hpa:HPAG1_0945"/>
<dbReference type="HOGENOM" id="CLU_033449_0_2_7"/>
<dbReference type="UniPathway" id="UPA00940"/>
<dbReference type="GO" id="GO:0005829">
    <property type="term" value="C:cytosol"/>
    <property type="evidence" value="ECO:0007669"/>
    <property type="project" value="TreeGrafter"/>
</dbReference>
<dbReference type="GO" id="GO:0047952">
    <property type="term" value="F:glycerol-3-phosphate dehydrogenase [NAD(P)+] activity"/>
    <property type="evidence" value="ECO:0007669"/>
    <property type="project" value="UniProtKB-UniRule"/>
</dbReference>
<dbReference type="GO" id="GO:0051287">
    <property type="term" value="F:NAD binding"/>
    <property type="evidence" value="ECO:0007669"/>
    <property type="project" value="InterPro"/>
</dbReference>
<dbReference type="GO" id="GO:0005975">
    <property type="term" value="P:carbohydrate metabolic process"/>
    <property type="evidence" value="ECO:0007669"/>
    <property type="project" value="InterPro"/>
</dbReference>
<dbReference type="GO" id="GO:0046167">
    <property type="term" value="P:glycerol-3-phosphate biosynthetic process"/>
    <property type="evidence" value="ECO:0007669"/>
    <property type="project" value="UniProtKB-UniRule"/>
</dbReference>
<dbReference type="GO" id="GO:0046168">
    <property type="term" value="P:glycerol-3-phosphate catabolic process"/>
    <property type="evidence" value="ECO:0007669"/>
    <property type="project" value="InterPro"/>
</dbReference>
<dbReference type="GO" id="GO:0006650">
    <property type="term" value="P:glycerophospholipid metabolic process"/>
    <property type="evidence" value="ECO:0007669"/>
    <property type="project" value="UniProtKB-UniRule"/>
</dbReference>
<dbReference type="GO" id="GO:0008654">
    <property type="term" value="P:phospholipid biosynthetic process"/>
    <property type="evidence" value="ECO:0007669"/>
    <property type="project" value="UniProtKB-KW"/>
</dbReference>
<dbReference type="FunFam" id="1.10.1040.10:FF:000025">
    <property type="entry name" value="Glycerol-3-phosphate dehydrogenase [NAD(P)+]"/>
    <property type="match status" value="1"/>
</dbReference>
<dbReference type="FunFam" id="3.40.50.720:FF:000310">
    <property type="entry name" value="Glycerol-3-phosphate dehydrogenase [NAD(P)+]"/>
    <property type="match status" value="1"/>
</dbReference>
<dbReference type="Gene3D" id="1.10.1040.10">
    <property type="entry name" value="N-(1-d-carboxylethyl)-l-norvaline Dehydrogenase, domain 2"/>
    <property type="match status" value="1"/>
</dbReference>
<dbReference type="Gene3D" id="3.40.50.720">
    <property type="entry name" value="NAD(P)-binding Rossmann-like Domain"/>
    <property type="match status" value="1"/>
</dbReference>
<dbReference type="HAMAP" id="MF_00394">
    <property type="entry name" value="NAD_Glyc3P_dehydrog"/>
    <property type="match status" value="1"/>
</dbReference>
<dbReference type="InterPro" id="IPR008927">
    <property type="entry name" value="6-PGluconate_DH-like_C_sf"/>
</dbReference>
<dbReference type="InterPro" id="IPR013328">
    <property type="entry name" value="6PGD_dom2"/>
</dbReference>
<dbReference type="InterPro" id="IPR006168">
    <property type="entry name" value="G3P_DH_NAD-dep"/>
</dbReference>
<dbReference type="InterPro" id="IPR006109">
    <property type="entry name" value="G3P_DH_NAD-dep_C"/>
</dbReference>
<dbReference type="InterPro" id="IPR011128">
    <property type="entry name" value="G3P_DH_NAD-dep_N"/>
</dbReference>
<dbReference type="InterPro" id="IPR036291">
    <property type="entry name" value="NAD(P)-bd_dom_sf"/>
</dbReference>
<dbReference type="NCBIfam" id="NF000940">
    <property type="entry name" value="PRK00094.1-2"/>
    <property type="match status" value="1"/>
</dbReference>
<dbReference type="NCBIfam" id="NF000943">
    <property type="entry name" value="PRK00094.2-1"/>
    <property type="match status" value="1"/>
</dbReference>
<dbReference type="PANTHER" id="PTHR11728">
    <property type="entry name" value="GLYCEROL-3-PHOSPHATE DEHYDROGENASE"/>
    <property type="match status" value="1"/>
</dbReference>
<dbReference type="PANTHER" id="PTHR11728:SF1">
    <property type="entry name" value="GLYCEROL-3-PHOSPHATE DEHYDROGENASE [NAD(+)] 2, CHLOROPLASTIC"/>
    <property type="match status" value="1"/>
</dbReference>
<dbReference type="Pfam" id="PF07479">
    <property type="entry name" value="NAD_Gly3P_dh_C"/>
    <property type="match status" value="1"/>
</dbReference>
<dbReference type="Pfam" id="PF01210">
    <property type="entry name" value="NAD_Gly3P_dh_N"/>
    <property type="match status" value="1"/>
</dbReference>
<dbReference type="PIRSF" id="PIRSF000114">
    <property type="entry name" value="Glycerol-3-P_dh"/>
    <property type="match status" value="1"/>
</dbReference>
<dbReference type="PRINTS" id="PR00077">
    <property type="entry name" value="GPDHDRGNASE"/>
</dbReference>
<dbReference type="SUPFAM" id="SSF48179">
    <property type="entry name" value="6-phosphogluconate dehydrogenase C-terminal domain-like"/>
    <property type="match status" value="1"/>
</dbReference>
<dbReference type="SUPFAM" id="SSF51735">
    <property type="entry name" value="NAD(P)-binding Rossmann-fold domains"/>
    <property type="match status" value="1"/>
</dbReference>
<dbReference type="PROSITE" id="PS00957">
    <property type="entry name" value="NAD_G3PDH"/>
    <property type="match status" value="1"/>
</dbReference>